<proteinExistence type="inferred from homology"/>
<accession>Q492N1</accession>
<organism>
    <name type="scientific">Blochmanniella pennsylvanica (strain BPEN)</name>
    <dbReference type="NCBI Taxonomy" id="291272"/>
    <lineage>
        <taxon>Bacteria</taxon>
        <taxon>Pseudomonadati</taxon>
        <taxon>Pseudomonadota</taxon>
        <taxon>Gammaproteobacteria</taxon>
        <taxon>Enterobacterales</taxon>
        <taxon>Enterobacteriaceae</taxon>
        <taxon>ant endosymbionts</taxon>
        <taxon>Candidatus Blochmanniella</taxon>
    </lineage>
</organism>
<keyword id="KW-0067">ATP-binding</keyword>
<keyword id="KW-0963">Cytoplasm</keyword>
<keyword id="KW-0237">DNA synthesis</keyword>
<keyword id="KW-0418">Kinase</keyword>
<keyword id="KW-0479">Metal-binding</keyword>
<keyword id="KW-0547">Nucleotide-binding</keyword>
<keyword id="KW-1185">Reference proteome</keyword>
<keyword id="KW-0808">Transferase</keyword>
<keyword id="KW-0862">Zinc</keyword>
<reference key="1">
    <citation type="journal article" date="2005" name="Genome Res.">
        <title>Genome sequence of Blochmannia pennsylvanicus indicates parallel evolutionary trends among bacterial mutualists of insects.</title>
        <authorList>
            <person name="Degnan P.H."/>
            <person name="Lazarus A.B."/>
            <person name="Wernegreen J.J."/>
        </authorList>
    </citation>
    <scope>NUCLEOTIDE SEQUENCE [LARGE SCALE GENOMIC DNA]</scope>
    <source>
        <strain>BPEN</strain>
    </source>
</reference>
<name>KITH_BLOPB</name>
<sequence length="205" mass="23820">MAQLYFYYSAMNAGKTTALLQSSYNYQERGMRTVLYTADMNSRDNRYKQIKSRIGLYASARVFNIKTNFFDQVVTIHQKDIIHCVLVDECHFLNRNQVIDLSKIVDVLNIPVLCYGLRTDFRADLFSGSLWLLAWADKLIELKTICYCGRKANRVLRIDDQGLIIRDGNQILVGGNNRYVSVCRKHFVEQLESPLSLTKRVYKNR</sequence>
<gene>
    <name evidence="1" type="primary">tdk</name>
    <name type="ordered locus">BPEN_447</name>
</gene>
<dbReference type="EC" id="2.7.1.21" evidence="1"/>
<dbReference type="EMBL" id="CP000016">
    <property type="protein sequence ID" value="AAZ41066.1"/>
    <property type="molecule type" value="Genomic_DNA"/>
</dbReference>
<dbReference type="RefSeq" id="WP_011282976.1">
    <property type="nucleotide sequence ID" value="NC_007292.1"/>
</dbReference>
<dbReference type="SMR" id="Q492N1"/>
<dbReference type="STRING" id="291272.BPEN_447"/>
<dbReference type="KEGG" id="bpn:BPEN_447"/>
<dbReference type="eggNOG" id="COG1435">
    <property type="taxonomic scope" value="Bacteria"/>
</dbReference>
<dbReference type="HOGENOM" id="CLU_064400_2_1_6"/>
<dbReference type="OrthoDB" id="9781579at2"/>
<dbReference type="Proteomes" id="UP000007794">
    <property type="component" value="Chromosome"/>
</dbReference>
<dbReference type="GO" id="GO:0005829">
    <property type="term" value="C:cytosol"/>
    <property type="evidence" value="ECO:0007669"/>
    <property type="project" value="TreeGrafter"/>
</dbReference>
<dbReference type="GO" id="GO:0005524">
    <property type="term" value="F:ATP binding"/>
    <property type="evidence" value="ECO:0007669"/>
    <property type="project" value="UniProtKB-UniRule"/>
</dbReference>
<dbReference type="GO" id="GO:0004797">
    <property type="term" value="F:thymidine kinase activity"/>
    <property type="evidence" value="ECO:0007669"/>
    <property type="project" value="UniProtKB-UniRule"/>
</dbReference>
<dbReference type="GO" id="GO:0008270">
    <property type="term" value="F:zinc ion binding"/>
    <property type="evidence" value="ECO:0007669"/>
    <property type="project" value="UniProtKB-UniRule"/>
</dbReference>
<dbReference type="GO" id="GO:0071897">
    <property type="term" value="P:DNA biosynthetic process"/>
    <property type="evidence" value="ECO:0007669"/>
    <property type="project" value="UniProtKB-KW"/>
</dbReference>
<dbReference type="GO" id="GO:0046104">
    <property type="term" value="P:thymidine metabolic process"/>
    <property type="evidence" value="ECO:0007669"/>
    <property type="project" value="TreeGrafter"/>
</dbReference>
<dbReference type="FunFam" id="3.40.50.300:FF:000323">
    <property type="entry name" value="Thymidine kinase"/>
    <property type="match status" value="1"/>
</dbReference>
<dbReference type="Gene3D" id="3.30.60.20">
    <property type="match status" value="1"/>
</dbReference>
<dbReference type="Gene3D" id="3.40.50.300">
    <property type="entry name" value="P-loop containing nucleotide triphosphate hydrolases"/>
    <property type="match status" value="1"/>
</dbReference>
<dbReference type="HAMAP" id="MF_00124">
    <property type="entry name" value="Thymidine_kinase"/>
    <property type="match status" value="1"/>
</dbReference>
<dbReference type="InterPro" id="IPR027417">
    <property type="entry name" value="P-loop_NTPase"/>
</dbReference>
<dbReference type="InterPro" id="IPR001267">
    <property type="entry name" value="Thymidine_kinase"/>
</dbReference>
<dbReference type="NCBIfam" id="NF003300">
    <property type="entry name" value="PRK04296.1-5"/>
    <property type="match status" value="1"/>
</dbReference>
<dbReference type="PANTHER" id="PTHR11441">
    <property type="entry name" value="THYMIDINE KINASE"/>
    <property type="match status" value="1"/>
</dbReference>
<dbReference type="PANTHER" id="PTHR11441:SF0">
    <property type="entry name" value="THYMIDINE KINASE, CYTOSOLIC"/>
    <property type="match status" value="1"/>
</dbReference>
<dbReference type="Pfam" id="PF00265">
    <property type="entry name" value="TK"/>
    <property type="match status" value="1"/>
</dbReference>
<dbReference type="PIRSF" id="PIRSF035805">
    <property type="entry name" value="TK_cell"/>
    <property type="match status" value="1"/>
</dbReference>
<dbReference type="SUPFAM" id="SSF57716">
    <property type="entry name" value="Glucocorticoid receptor-like (DNA-binding domain)"/>
    <property type="match status" value="1"/>
</dbReference>
<dbReference type="SUPFAM" id="SSF52540">
    <property type="entry name" value="P-loop containing nucleoside triphosphate hydrolases"/>
    <property type="match status" value="1"/>
</dbReference>
<comment type="catalytic activity">
    <reaction evidence="1">
        <text>thymidine + ATP = dTMP + ADP + H(+)</text>
        <dbReference type="Rhea" id="RHEA:19129"/>
        <dbReference type="ChEBI" id="CHEBI:15378"/>
        <dbReference type="ChEBI" id="CHEBI:17748"/>
        <dbReference type="ChEBI" id="CHEBI:30616"/>
        <dbReference type="ChEBI" id="CHEBI:63528"/>
        <dbReference type="ChEBI" id="CHEBI:456216"/>
        <dbReference type="EC" id="2.7.1.21"/>
    </reaction>
</comment>
<comment type="subunit">
    <text evidence="1">Homotetramer.</text>
</comment>
<comment type="subcellular location">
    <subcellularLocation>
        <location evidence="1">Cytoplasm</location>
    </subcellularLocation>
</comment>
<comment type="similarity">
    <text evidence="1">Belongs to the thymidine kinase family.</text>
</comment>
<protein>
    <recommendedName>
        <fullName evidence="1">Thymidine kinase</fullName>
        <ecNumber evidence="1">2.7.1.21</ecNumber>
    </recommendedName>
</protein>
<evidence type="ECO:0000255" key="1">
    <source>
        <dbReference type="HAMAP-Rule" id="MF_00124"/>
    </source>
</evidence>
<feature type="chain" id="PRO_0000242788" description="Thymidine kinase">
    <location>
        <begin position="1"/>
        <end position="205"/>
    </location>
</feature>
<feature type="active site" description="Proton acceptor" evidence="1">
    <location>
        <position position="89"/>
    </location>
</feature>
<feature type="binding site" evidence="1">
    <location>
        <begin position="9"/>
        <end position="16"/>
    </location>
    <ligand>
        <name>ATP</name>
        <dbReference type="ChEBI" id="CHEBI:30616"/>
    </ligand>
</feature>
<feature type="binding site" evidence="1">
    <location>
        <begin position="88"/>
        <end position="91"/>
    </location>
    <ligand>
        <name>ATP</name>
        <dbReference type="ChEBI" id="CHEBI:30616"/>
    </ligand>
</feature>
<feature type="binding site" evidence="1">
    <location>
        <position position="146"/>
    </location>
    <ligand>
        <name>Zn(2+)</name>
        <dbReference type="ChEBI" id="CHEBI:29105"/>
    </ligand>
</feature>
<feature type="binding site" evidence="1">
    <location>
        <position position="148"/>
    </location>
    <ligand>
        <name>Zn(2+)</name>
        <dbReference type="ChEBI" id="CHEBI:29105"/>
    </ligand>
</feature>
<feature type="binding site" evidence="1">
    <location>
        <position position="183"/>
    </location>
    <ligand>
        <name>Zn(2+)</name>
        <dbReference type="ChEBI" id="CHEBI:29105"/>
    </ligand>
</feature>
<feature type="binding site" evidence="1">
    <location>
        <position position="186"/>
    </location>
    <ligand>
        <name>Zn(2+)</name>
        <dbReference type="ChEBI" id="CHEBI:29105"/>
    </ligand>
</feature>